<proteinExistence type="inferred from homology"/>
<dbReference type="EC" id="3.1.1.29" evidence="1"/>
<dbReference type="EMBL" id="CP000056">
    <property type="protein sequence ID" value="AAX71120.1"/>
    <property type="status" value="ALT_INIT"/>
    <property type="molecule type" value="Genomic_DNA"/>
</dbReference>
<dbReference type="RefSeq" id="WP_002981924.1">
    <property type="nucleotide sequence ID" value="NC_007296.2"/>
</dbReference>
<dbReference type="SMR" id="Q48VW8"/>
<dbReference type="GeneID" id="69899957"/>
<dbReference type="KEGG" id="spb:M28_Spy0005"/>
<dbReference type="HOGENOM" id="CLU_062456_4_1_9"/>
<dbReference type="GO" id="GO:0005737">
    <property type="term" value="C:cytoplasm"/>
    <property type="evidence" value="ECO:0007669"/>
    <property type="project" value="UniProtKB-SubCell"/>
</dbReference>
<dbReference type="GO" id="GO:0004045">
    <property type="term" value="F:peptidyl-tRNA hydrolase activity"/>
    <property type="evidence" value="ECO:0007669"/>
    <property type="project" value="UniProtKB-UniRule"/>
</dbReference>
<dbReference type="GO" id="GO:0000049">
    <property type="term" value="F:tRNA binding"/>
    <property type="evidence" value="ECO:0007669"/>
    <property type="project" value="UniProtKB-UniRule"/>
</dbReference>
<dbReference type="GO" id="GO:0006515">
    <property type="term" value="P:protein quality control for misfolded or incompletely synthesized proteins"/>
    <property type="evidence" value="ECO:0007669"/>
    <property type="project" value="UniProtKB-UniRule"/>
</dbReference>
<dbReference type="GO" id="GO:0072344">
    <property type="term" value="P:rescue of stalled ribosome"/>
    <property type="evidence" value="ECO:0007669"/>
    <property type="project" value="UniProtKB-UniRule"/>
</dbReference>
<dbReference type="CDD" id="cd00462">
    <property type="entry name" value="PTH"/>
    <property type="match status" value="1"/>
</dbReference>
<dbReference type="FunFam" id="3.40.50.1470:FF:000001">
    <property type="entry name" value="Peptidyl-tRNA hydrolase"/>
    <property type="match status" value="1"/>
</dbReference>
<dbReference type="Gene3D" id="3.40.50.1470">
    <property type="entry name" value="Peptidyl-tRNA hydrolase"/>
    <property type="match status" value="1"/>
</dbReference>
<dbReference type="HAMAP" id="MF_00083">
    <property type="entry name" value="Pept_tRNA_hydro_bact"/>
    <property type="match status" value="1"/>
</dbReference>
<dbReference type="InterPro" id="IPR001328">
    <property type="entry name" value="Pept_tRNA_hydro"/>
</dbReference>
<dbReference type="InterPro" id="IPR018171">
    <property type="entry name" value="Pept_tRNA_hydro_CS"/>
</dbReference>
<dbReference type="InterPro" id="IPR036416">
    <property type="entry name" value="Pept_tRNA_hydro_sf"/>
</dbReference>
<dbReference type="NCBIfam" id="TIGR00447">
    <property type="entry name" value="pth"/>
    <property type="match status" value="1"/>
</dbReference>
<dbReference type="PANTHER" id="PTHR17224">
    <property type="entry name" value="PEPTIDYL-TRNA HYDROLASE"/>
    <property type="match status" value="1"/>
</dbReference>
<dbReference type="PANTHER" id="PTHR17224:SF1">
    <property type="entry name" value="PEPTIDYL-TRNA HYDROLASE"/>
    <property type="match status" value="1"/>
</dbReference>
<dbReference type="Pfam" id="PF01195">
    <property type="entry name" value="Pept_tRNA_hydro"/>
    <property type="match status" value="1"/>
</dbReference>
<dbReference type="SUPFAM" id="SSF53178">
    <property type="entry name" value="Peptidyl-tRNA hydrolase-like"/>
    <property type="match status" value="1"/>
</dbReference>
<dbReference type="PROSITE" id="PS01195">
    <property type="entry name" value="PEPT_TRNA_HYDROL_1"/>
    <property type="match status" value="1"/>
</dbReference>
<dbReference type="PROSITE" id="PS01196">
    <property type="entry name" value="PEPT_TRNA_HYDROL_2"/>
    <property type="match status" value="1"/>
</dbReference>
<sequence>MVKMIVGLGNPGSKYEKTKHNIGFMAIDNIVKNLDVTFTDDKNFKAQIGSTFINHEKVYFVKPTTFMNNSGIAVKALLTYYNIDITDLIVIYDDLDMEVSKLRLRSKGSAGGHNGIKSIIAHIGTQEFNRIKVGIGRPLKGMTVINHVMGQFNTEDNIAISLTLDRVVNAVKFYLQENDFEKTMQKFNG</sequence>
<keyword id="KW-0963">Cytoplasm</keyword>
<keyword id="KW-0378">Hydrolase</keyword>
<keyword id="KW-0694">RNA-binding</keyword>
<keyword id="KW-0820">tRNA-binding</keyword>
<organism>
    <name type="scientific">Streptococcus pyogenes serotype M28 (strain MGAS6180)</name>
    <dbReference type="NCBI Taxonomy" id="319701"/>
    <lineage>
        <taxon>Bacteria</taxon>
        <taxon>Bacillati</taxon>
        <taxon>Bacillota</taxon>
        <taxon>Bacilli</taxon>
        <taxon>Lactobacillales</taxon>
        <taxon>Streptococcaceae</taxon>
        <taxon>Streptococcus</taxon>
    </lineage>
</organism>
<evidence type="ECO:0000255" key="1">
    <source>
        <dbReference type="HAMAP-Rule" id="MF_00083"/>
    </source>
</evidence>
<evidence type="ECO:0000305" key="2"/>
<protein>
    <recommendedName>
        <fullName evidence="1">Peptidyl-tRNA hydrolase</fullName>
        <shortName evidence="1">Pth</shortName>
        <ecNumber evidence="1">3.1.1.29</ecNumber>
    </recommendedName>
</protein>
<reference key="1">
    <citation type="journal article" date="2005" name="J. Infect. Dis.">
        <title>Genome sequence of a serotype M28 strain of group A Streptococcus: potential new insights into puerperal sepsis and bacterial disease specificity.</title>
        <authorList>
            <person name="Green N.M."/>
            <person name="Zhang S."/>
            <person name="Porcella S.F."/>
            <person name="Nagiec M.J."/>
            <person name="Barbian K.D."/>
            <person name="Beres S.B."/>
            <person name="Lefebvre R.B."/>
            <person name="Musser J.M."/>
        </authorList>
    </citation>
    <scope>NUCLEOTIDE SEQUENCE [LARGE SCALE GENOMIC DNA]</scope>
    <source>
        <strain>MGAS6180</strain>
    </source>
</reference>
<accession>Q48VW8</accession>
<gene>
    <name evidence="1" type="primary">pth</name>
    <name type="ordered locus">M28_Spy0005</name>
</gene>
<name>PTH_STRPM</name>
<feature type="chain" id="PRO_0000264121" description="Peptidyl-tRNA hydrolase">
    <location>
        <begin position="1"/>
        <end position="189"/>
    </location>
</feature>
<feature type="active site" description="Proton acceptor" evidence="1">
    <location>
        <position position="20"/>
    </location>
</feature>
<feature type="binding site" evidence="1">
    <location>
        <position position="15"/>
    </location>
    <ligand>
        <name>tRNA</name>
        <dbReference type="ChEBI" id="CHEBI:17843"/>
    </ligand>
</feature>
<feature type="binding site" evidence="1">
    <location>
        <position position="66"/>
    </location>
    <ligand>
        <name>tRNA</name>
        <dbReference type="ChEBI" id="CHEBI:17843"/>
    </ligand>
</feature>
<feature type="binding site" evidence="1">
    <location>
        <position position="68"/>
    </location>
    <ligand>
        <name>tRNA</name>
        <dbReference type="ChEBI" id="CHEBI:17843"/>
    </ligand>
</feature>
<feature type="binding site" evidence="1">
    <location>
        <position position="114"/>
    </location>
    <ligand>
        <name>tRNA</name>
        <dbReference type="ChEBI" id="CHEBI:17843"/>
    </ligand>
</feature>
<feature type="site" description="Discriminates between blocked and unblocked aminoacyl-tRNA" evidence="1">
    <location>
        <position position="10"/>
    </location>
</feature>
<feature type="site" description="Stabilizes the basic form of H active site to accept a proton" evidence="1">
    <location>
        <position position="93"/>
    </location>
</feature>
<comment type="function">
    <text evidence="1">Hydrolyzes ribosome-free peptidyl-tRNAs (with 1 or more amino acids incorporated), which drop off the ribosome during protein synthesis, or as a result of ribosome stalling.</text>
</comment>
<comment type="function">
    <text evidence="1">Catalyzes the release of premature peptidyl moieties from peptidyl-tRNA molecules trapped in stalled 50S ribosomal subunits, and thus maintains levels of free tRNAs and 50S ribosomes.</text>
</comment>
<comment type="catalytic activity">
    <reaction evidence="1">
        <text>an N-acyl-L-alpha-aminoacyl-tRNA + H2O = an N-acyl-L-amino acid + a tRNA + H(+)</text>
        <dbReference type="Rhea" id="RHEA:54448"/>
        <dbReference type="Rhea" id="RHEA-COMP:10123"/>
        <dbReference type="Rhea" id="RHEA-COMP:13883"/>
        <dbReference type="ChEBI" id="CHEBI:15377"/>
        <dbReference type="ChEBI" id="CHEBI:15378"/>
        <dbReference type="ChEBI" id="CHEBI:59874"/>
        <dbReference type="ChEBI" id="CHEBI:78442"/>
        <dbReference type="ChEBI" id="CHEBI:138191"/>
        <dbReference type="EC" id="3.1.1.29"/>
    </reaction>
</comment>
<comment type="subunit">
    <text evidence="1">Monomer.</text>
</comment>
<comment type="subcellular location">
    <subcellularLocation>
        <location evidence="1">Cytoplasm</location>
    </subcellularLocation>
</comment>
<comment type="similarity">
    <text evidence="1">Belongs to the PTH family.</text>
</comment>
<comment type="sequence caution" evidence="2">
    <conflict type="erroneous initiation">
        <sequence resource="EMBL-CDS" id="AAX71120"/>
    </conflict>
    <text>Extended N-terminus.</text>
</comment>